<evidence type="ECO:0000255" key="1">
    <source>
        <dbReference type="HAMAP-Rule" id="MF_00071"/>
    </source>
</evidence>
<sequence length="607" mass="68288">MDKQDRYNRRKNIRNFSIIAHIDHGKSTLADRILENTKSVETRDMQSQLLDSMDLERERGITIKLNAVRLKYEAKDGETYTFHLIDTPGHVDFTYEVSRSLAACEGAILVVDAAQGIEAQTLANVYLALDNDLELLPVINKIDLPAAEPERVKQELEDVIGIDKEDVVLASAKSNIGIEDILEKIVEVVPPPEGDPEAPLKALIFDSEYDPYRGVISSIRVMEGVVKAGDRIKMMATGKEFEVTEVGINTPKQLSVDELTVGDVGYIIASIKNVDDSRVGDTITHAERPAEAPLQGYKKMNPMVFCGLFPIDNKDYNDLREALEKLQLNDASLEFEPESSQALGFGYRTGFLGMLHMEIIQERIEREFGIELIATAPSVIYQCILKSGEEVSVDNPANMPDRDKIETIYEPFVRATMMVPNDYVGAVMELCQRKRGQFINMEYMDDIRVNIIYEIPLSEVVFDFFDQLKSNTKGYASFDYEFIDNKESDLVKMDILLNGEKVDALSFIVHKEFAYERGKTLVDKLKTLIPRQQFEVPVQAAVGQKIVARTNIKSMGKNVLSKCYGGDITRKRKLLEKQKAGKAKMKAVGNVEIPQDAFLAVLKMDED</sequence>
<protein>
    <recommendedName>
        <fullName evidence="1">Elongation factor 4</fullName>
        <shortName evidence="1">EF-4</shortName>
        <ecNumber evidence="1">3.6.5.n1</ecNumber>
    </recommendedName>
    <alternativeName>
        <fullName evidence="1">Ribosomal back-translocase LepA</fullName>
    </alternativeName>
</protein>
<reference key="1">
    <citation type="journal article" date="2005" name="Proc. Natl. Acad. Sci. U.S.A.">
        <title>Whole genome sequence of Staphylococcus saprophyticus reveals the pathogenesis of uncomplicated urinary tract infection.</title>
        <authorList>
            <person name="Kuroda M."/>
            <person name="Yamashita A."/>
            <person name="Hirakawa H."/>
            <person name="Kumano M."/>
            <person name="Morikawa K."/>
            <person name="Higashide M."/>
            <person name="Maruyama A."/>
            <person name="Inose Y."/>
            <person name="Matoba K."/>
            <person name="Toh H."/>
            <person name="Kuhara S."/>
            <person name="Hattori M."/>
            <person name="Ohta T."/>
        </authorList>
    </citation>
    <scope>NUCLEOTIDE SEQUENCE [LARGE SCALE GENOMIC DNA]</scope>
    <source>
        <strain>ATCC 15305 / DSM 20229 / NCIMB 8711 / NCTC 7292 / S-41</strain>
    </source>
</reference>
<keyword id="KW-1003">Cell membrane</keyword>
<keyword id="KW-0342">GTP-binding</keyword>
<keyword id="KW-0378">Hydrolase</keyword>
<keyword id="KW-0472">Membrane</keyword>
<keyword id="KW-0547">Nucleotide-binding</keyword>
<keyword id="KW-0648">Protein biosynthesis</keyword>
<keyword id="KW-1185">Reference proteome</keyword>
<name>LEPA_STAS1</name>
<feature type="chain" id="PRO_0000224799" description="Elongation factor 4">
    <location>
        <begin position="1"/>
        <end position="607"/>
    </location>
</feature>
<feature type="domain" description="tr-type G">
    <location>
        <begin position="11"/>
        <end position="193"/>
    </location>
</feature>
<feature type="binding site" evidence="1">
    <location>
        <begin position="23"/>
        <end position="28"/>
    </location>
    <ligand>
        <name>GTP</name>
        <dbReference type="ChEBI" id="CHEBI:37565"/>
    </ligand>
</feature>
<feature type="binding site" evidence="1">
    <location>
        <begin position="140"/>
        <end position="143"/>
    </location>
    <ligand>
        <name>GTP</name>
        <dbReference type="ChEBI" id="CHEBI:37565"/>
    </ligand>
</feature>
<gene>
    <name evidence="1" type="primary">lepA</name>
    <name type="ordered locus">SSP1173</name>
</gene>
<accession>Q49Y26</accession>
<comment type="function">
    <text evidence="1">Required for accurate and efficient protein synthesis under certain stress conditions. May act as a fidelity factor of the translation reaction, by catalyzing a one-codon backward translocation of tRNAs on improperly translocated ribosomes. Back-translocation proceeds from a post-translocation (POST) complex to a pre-translocation (PRE) complex, thus giving elongation factor G a second chance to translocate the tRNAs correctly. Binds to ribosomes in a GTP-dependent manner.</text>
</comment>
<comment type="catalytic activity">
    <reaction evidence="1">
        <text>GTP + H2O = GDP + phosphate + H(+)</text>
        <dbReference type="Rhea" id="RHEA:19669"/>
        <dbReference type="ChEBI" id="CHEBI:15377"/>
        <dbReference type="ChEBI" id="CHEBI:15378"/>
        <dbReference type="ChEBI" id="CHEBI:37565"/>
        <dbReference type="ChEBI" id="CHEBI:43474"/>
        <dbReference type="ChEBI" id="CHEBI:58189"/>
        <dbReference type="EC" id="3.6.5.n1"/>
    </reaction>
</comment>
<comment type="subcellular location">
    <subcellularLocation>
        <location evidence="1">Cell membrane</location>
        <topology evidence="1">Peripheral membrane protein</topology>
        <orientation evidence="1">Cytoplasmic side</orientation>
    </subcellularLocation>
</comment>
<comment type="similarity">
    <text evidence="1">Belongs to the TRAFAC class translation factor GTPase superfamily. Classic translation factor GTPase family. LepA subfamily.</text>
</comment>
<proteinExistence type="inferred from homology"/>
<dbReference type="EC" id="3.6.5.n1" evidence="1"/>
<dbReference type="EMBL" id="AP008934">
    <property type="protein sequence ID" value="BAE18318.1"/>
    <property type="molecule type" value="Genomic_DNA"/>
</dbReference>
<dbReference type="RefSeq" id="WP_011302990.1">
    <property type="nucleotide sequence ID" value="NZ_MTGA01000038.1"/>
</dbReference>
<dbReference type="SMR" id="Q49Y26"/>
<dbReference type="GeneID" id="3616920"/>
<dbReference type="KEGG" id="ssp:SSP1173"/>
<dbReference type="PATRIC" id="fig|342451.11.peg.1171"/>
<dbReference type="eggNOG" id="COG0481">
    <property type="taxonomic scope" value="Bacteria"/>
</dbReference>
<dbReference type="HOGENOM" id="CLU_009995_3_3_9"/>
<dbReference type="OrthoDB" id="9804431at2"/>
<dbReference type="Proteomes" id="UP000006371">
    <property type="component" value="Chromosome"/>
</dbReference>
<dbReference type="GO" id="GO:0005886">
    <property type="term" value="C:plasma membrane"/>
    <property type="evidence" value="ECO:0007669"/>
    <property type="project" value="UniProtKB-SubCell"/>
</dbReference>
<dbReference type="GO" id="GO:0005525">
    <property type="term" value="F:GTP binding"/>
    <property type="evidence" value="ECO:0007669"/>
    <property type="project" value="UniProtKB-UniRule"/>
</dbReference>
<dbReference type="GO" id="GO:0003924">
    <property type="term" value="F:GTPase activity"/>
    <property type="evidence" value="ECO:0007669"/>
    <property type="project" value="UniProtKB-UniRule"/>
</dbReference>
<dbReference type="GO" id="GO:0043022">
    <property type="term" value="F:ribosome binding"/>
    <property type="evidence" value="ECO:0007669"/>
    <property type="project" value="UniProtKB-UniRule"/>
</dbReference>
<dbReference type="GO" id="GO:0003746">
    <property type="term" value="F:translation elongation factor activity"/>
    <property type="evidence" value="ECO:0007669"/>
    <property type="project" value="UniProtKB-UniRule"/>
</dbReference>
<dbReference type="GO" id="GO:0045727">
    <property type="term" value="P:positive regulation of translation"/>
    <property type="evidence" value="ECO:0007669"/>
    <property type="project" value="UniProtKB-UniRule"/>
</dbReference>
<dbReference type="CDD" id="cd03699">
    <property type="entry name" value="EF4_II"/>
    <property type="match status" value="1"/>
</dbReference>
<dbReference type="CDD" id="cd16260">
    <property type="entry name" value="EF4_III"/>
    <property type="match status" value="1"/>
</dbReference>
<dbReference type="CDD" id="cd01890">
    <property type="entry name" value="LepA"/>
    <property type="match status" value="1"/>
</dbReference>
<dbReference type="CDD" id="cd03709">
    <property type="entry name" value="lepA_C"/>
    <property type="match status" value="1"/>
</dbReference>
<dbReference type="FunFam" id="3.40.50.300:FF:000078">
    <property type="entry name" value="Elongation factor 4"/>
    <property type="match status" value="1"/>
</dbReference>
<dbReference type="FunFam" id="2.40.30.10:FF:000015">
    <property type="entry name" value="Translation factor GUF1, mitochondrial"/>
    <property type="match status" value="1"/>
</dbReference>
<dbReference type="FunFam" id="3.30.70.240:FF:000007">
    <property type="entry name" value="Translation factor GUF1, mitochondrial"/>
    <property type="match status" value="1"/>
</dbReference>
<dbReference type="FunFam" id="3.30.70.2570:FF:000001">
    <property type="entry name" value="Translation factor GUF1, mitochondrial"/>
    <property type="match status" value="1"/>
</dbReference>
<dbReference type="FunFam" id="3.30.70.870:FF:000004">
    <property type="entry name" value="Translation factor GUF1, mitochondrial"/>
    <property type="match status" value="1"/>
</dbReference>
<dbReference type="Gene3D" id="3.30.70.240">
    <property type="match status" value="1"/>
</dbReference>
<dbReference type="Gene3D" id="3.30.70.2570">
    <property type="entry name" value="Elongation factor 4, C-terminal domain"/>
    <property type="match status" value="1"/>
</dbReference>
<dbReference type="Gene3D" id="3.30.70.870">
    <property type="entry name" value="Elongation Factor G (Translational Gtpase), domain 3"/>
    <property type="match status" value="1"/>
</dbReference>
<dbReference type="Gene3D" id="3.40.50.300">
    <property type="entry name" value="P-loop containing nucleotide triphosphate hydrolases"/>
    <property type="match status" value="1"/>
</dbReference>
<dbReference type="Gene3D" id="2.40.30.10">
    <property type="entry name" value="Translation factors"/>
    <property type="match status" value="1"/>
</dbReference>
<dbReference type="HAMAP" id="MF_00071">
    <property type="entry name" value="LepA"/>
    <property type="match status" value="1"/>
</dbReference>
<dbReference type="InterPro" id="IPR006297">
    <property type="entry name" value="EF-4"/>
</dbReference>
<dbReference type="InterPro" id="IPR041095">
    <property type="entry name" value="EFG_II"/>
</dbReference>
<dbReference type="InterPro" id="IPR035647">
    <property type="entry name" value="EFG_III/V"/>
</dbReference>
<dbReference type="InterPro" id="IPR000640">
    <property type="entry name" value="EFG_V-like"/>
</dbReference>
<dbReference type="InterPro" id="IPR004161">
    <property type="entry name" value="EFTu-like_2"/>
</dbReference>
<dbReference type="InterPro" id="IPR031157">
    <property type="entry name" value="G_TR_CS"/>
</dbReference>
<dbReference type="InterPro" id="IPR038363">
    <property type="entry name" value="LepA_C_sf"/>
</dbReference>
<dbReference type="InterPro" id="IPR013842">
    <property type="entry name" value="LepA_CTD"/>
</dbReference>
<dbReference type="InterPro" id="IPR035654">
    <property type="entry name" value="LepA_IV"/>
</dbReference>
<dbReference type="InterPro" id="IPR027417">
    <property type="entry name" value="P-loop_NTPase"/>
</dbReference>
<dbReference type="InterPro" id="IPR005225">
    <property type="entry name" value="Small_GTP-bd"/>
</dbReference>
<dbReference type="InterPro" id="IPR000795">
    <property type="entry name" value="T_Tr_GTP-bd_dom"/>
</dbReference>
<dbReference type="InterPro" id="IPR009000">
    <property type="entry name" value="Transl_B-barrel_sf"/>
</dbReference>
<dbReference type="NCBIfam" id="TIGR01393">
    <property type="entry name" value="lepA"/>
    <property type="match status" value="1"/>
</dbReference>
<dbReference type="NCBIfam" id="TIGR00231">
    <property type="entry name" value="small_GTP"/>
    <property type="match status" value="1"/>
</dbReference>
<dbReference type="PANTHER" id="PTHR43512:SF4">
    <property type="entry name" value="TRANSLATION FACTOR GUF1 HOMOLOG, CHLOROPLASTIC"/>
    <property type="match status" value="1"/>
</dbReference>
<dbReference type="PANTHER" id="PTHR43512">
    <property type="entry name" value="TRANSLATION FACTOR GUF1-RELATED"/>
    <property type="match status" value="1"/>
</dbReference>
<dbReference type="Pfam" id="PF00679">
    <property type="entry name" value="EFG_C"/>
    <property type="match status" value="1"/>
</dbReference>
<dbReference type="Pfam" id="PF14492">
    <property type="entry name" value="EFG_III"/>
    <property type="match status" value="1"/>
</dbReference>
<dbReference type="Pfam" id="PF00009">
    <property type="entry name" value="GTP_EFTU"/>
    <property type="match status" value="1"/>
</dbReference>
<dbReference type="Pfam" id="PF03144">
    <property type="entry name" value="GTP_EFTU_D2"/>
    <property type="match status" value="1"/>
</dbReference>
<dbReference type="Pfam" id="PF06421">
    <property type="entry name" value="LepA_C"/>
    <property type="match status" value="1"/>
</dbReference>
<dbReference type="PRINTS" id="PR00315">
    <property type="entry name" value="ELONGATNFCT"/>
</dbReference>
<dbReference type="SMART" id="SM00838">
    <property type="entry name" value="EFG_C"/>
    <property type="match status" value="1"/>
</dbReference>
<dbReference type="SUPFAM" id="SSF54980">
    <property type="entry name" value="EF-G C-terminal domain-like"/>
    <property type="match status" value="2"/>
</dbReference>
<dbReference type="SUPFAM" id="SSF52540">
    <property type="entry name" value="P-loop containing nucleoside triphosphate hydrolases"/>
    <property type="match status" value="1"/>
</dbReference>
<dbReference type="SUPFAM" id="SSF50447">
    <property type="entry name" value="Translation proteins"/>
    <property type="match status" value="1"/>
</dbReference>
<dbReference type="PROSITE" id="PS00301">
    <property type="entry name" value="G_TR_1"/>
    <property type="match status" value="1"/>
</dbReference>
<dbReference type="PROSITE" id="PS51722">
    <property type="entry name" value="G_TR_2"/>
    <property type="match status" value="1"/>
</dbReference>
<organism>
    <name type="scientific">Staphylococcus saprophyticus subsp. saprophyticus (strain ATCC 15305 / DSM 20229 / NCIMB 8711 / NCTC 7292 / S-41)</name>
    <dbReference type="NCBI Taxonomy" id="342451"/>
    <lineage>
        <taxon>Bacteria</taxon>
        <taxon>Bacillati</taxon>
        <taxon>Bacillota</taxon>
        <taxon>Bacilli</taxon>
        <taxon>Bacillales</taxon>
        <taxon>Staphylococcaceae</taxon>
        <taxon>Staphylococcus</taxon>
    </lineage>
</organism>